<feature type="chain" id="PRO_1000131971" description="Aspartate/glutamate leucyltransferase">
    <location>
        <begin position="1"/>
        <end position="249"/>
    </location>
</feature>
<gene>
    <name evidence="1" type="primary">bpt</name>
    <name type="ordered locus">BAbS19_I07270</name>
</gene>
<dbReference type="EC" id="2.3.2.29" evidence="1"/>
<dbReference type="EMBL" id="CP000887">
    <property type="protein sequence ID" value="ACD72251.1"/>
    <property type="molecule type" value="Genomic_DNA"/>
</dbReference>
<dbReference type="RefSeq" id="WP_002969423.1">
    <property type="nucleotide sequence ID" value="NC_010742.1"/>
</dbReference>
<dbReference type="SMR" id="B2S504"/>
<dbReference type="KEGG" id="bmc:BAbS19_I07270"/>
<dbReference type="HOGENOM" id="CLU_077607_1_0_5"/>
<dbReference type="Proteomes" id="UP000002565">
    <property type="component" value="Chromosome 1"/>
</dbReference>
<dbReference type="GO" id="GO:0005737">
    <property type="term" value="C:cytoplasm"/>
    <property type="evidence" value="ECO:0007669"/>
    <property type="project" value="UniProtKB-SubCell"/>
</dbReference>
<dbReference type="GO" id="GO:0004057">
    <property type="term" value="F:arginyl-tRNA--protein transferase activity"/>
    <property type="evidence" value="ECO:0007669"/>
    <property type="project" value="InterPro"/>
</dbReference>
<dbReference type="GO" id="GO:0008914">
    <property type="term" value="F:leucyl-tRNA--protein transferase activity"/>
    <property type="evidence" value="ECO:0007669"/>
    <property type="project" value="UniProtKB-UniRule"/>
</dbReference>
<dbReference type="GO" id="GO:0071596">
    <property type="term" value="P:ubiquitin-dependent protein catabolic process via the N-end rule pathway"/>
    <property type="evidence" value="ECO:0007669"/>
    <property type="project" value="InterPro"/>
</dbReference>
<dbReference type="HAMAP" id="MF_00689">
    <property type="entry name" value="Bpt"/>
    <property type="match status" value="1"/>
</dbReference>
<dbReference type="InterPro" id="IPR016181">
    <property type="entry name" value="Acyl_CoA_acyltransferase"/>
</dbReference>
<dbReference type="InterPro" id="IPR017138">
    <property type="entry name" value="Asp_Glu_LeuTrfase"/>
</dbReference>
<dbReference type="InterPro" id="IPR030700">
    <property type="entry name" value="N-end_Aminoacyl_Trfase"/>
</dbReference>
<dbReference type="InterPro" id="IPR007472">
    <property type="entry name" value="N-end_Aminoacyl_Trfase_C"/>
</dbReference>
<dbReference type="InterPro" id="IPR007471">
    <property type="entry name" value="N-end_Aminoacyl_Trfase_N"/>
</dbReference>
<dbReference type="NCBIfam" id="NF002343">
    <property type="entry name" value="PRK01305.1-4"/>
    <property type="match status" value="1"/>
</dbReference>
<dbReference type="NCBIfam" id="NF002346">
    <property type="entry name" value="PRK01305.2-3"/>
    <property type="match status" value="1"/>
</dbReference>
<dbReference type="PANTHER" id="PTHR21367">
    <property type="entry name" value="ARGININE-TRNA-PROTEIN TRANSFERASE 1"/>
    <property type="match status" value="1"/>
</dbReference>
<dbReference type="PANTHER" id="PTHR21367:SF1">
    <property type="entry name" value="ARGINYL-TRNA--PROTEIN TRANSFERASE 1"/>
    <property type="match status" value="1"/>
</dbReference>
<dbReference type="Pfam" id="PF04377">
    <property type="entry name" value="ATE_C"/>
    <property type="match status" value="1"/>
</dbReference>
<dbReference type="Pfam" id="PF04376">
    <property type="entry name" value="ATE_N"/>
    <property type="match status" value="1"/>
</dbReference>
<dbReference type="PIRSF" id="PIRSF037208">
    <property type="entry name" value="ATE_pro_prd"/>
    <property type="match status" value="1"/>
</dbReference>
<dbReference type="SUPFAM" id="SSF55729">
    <property type="entry name" value="Acyl-CoA N-acyltransferases (Nat)"/>
    <property type="match status" value="1"/>
</dbReference>
<accession>B2S504</accession>
<organism>
    <name type="scientific">Brucella abortus (strain S19)</name>
    <dbReference type="NCBI Taxonomy" id="430066"/>
    <lineage>
        <taxon>Bacteria</taxon>
        <taxon>Pseudomonadati</taxon>
        <taxon>Pseudomonadota</taxon>
        <taxon>Alphaproteobacteria</taxon>
        <taxon>Hyphomicrobiales</taxon>
        <taxon>Brucellaceae</taxon>
        <taxon>Brucella/Ochrobactrum group</taxon>
        <taxon>Brucella</taxon>
    </lineage>
</organism>
<reference key="1">
    <citation type="journal article" date="2008" name="PLoS ONE">
        <title>Genome sequence of Brucella abortus vaccine strain S19 compared to virulent strains yields candidate virulence genes.</title>
        <authorList>
            <person name="Crasta O.R."/>
            <person name="Folkerts O."/>
            <person name="Fei Z."/>
            <person name="Mane S.P."/>
            <person name="Evans C."/>
            <person name="Martino-Catt S."/>
            <person name="Bricker B."/>
            <person name="Yu G."/>
            <person name="Du L."/>
            <person name="Sobral B.W."/>
        </authorList>
    </citation>
    <scope>NUCLEOTIDE SEQUENCE [LARGE SCALE GENOMIC DNA]</scope>
    <source>
        <strain>S19</strain>
    </source>
</reference>
<comment type="function">
    <text evidence="1">Functions in the N-end rule pathway of protein degradation where it conjugates Leu from its aminoacyl-tRNA to the N-termini of proteins containing an N-terminal aspartate or glutamate.</text>
</comment>
<comment type="catalytic activity">
    <reaction evidence="1">
        <text>N-terminal L-glutamyl-[protein] + L-leucyl-tRNA(Leu) = N-terminal L-leucyl-L-glutamyl-[protein] + tRNA(Leu) + H(+)</text>
        <dbReference type="Rhea" id="RHEA:50412"/>
        <dbReference type="Rhea" id="RHEA-COMP:9613"/>
        <dbReference type="Rhea" id="RHEA-COMP:9622"/>
        <dbReference type="Rhea" id="RHEA-COMP:12664"/>
        <dbReference type="Rhea" id="RHEA-COMP:12668"/>
        <dbReference type="ChEBI" id="CHEBI:15378"/>
        <dbReference type="ChEBI" id="CHEBI:64721"/>
        <dbReference type="ChEBI" id="CHEBI:78442"/>
        <dbReference type="ChEBI" id="CHEBI:78494"/>
        <dbReference type="ChEBI" id="CHEBI:133041"/>
        <dbReference type="EC" id="2.3.2.29"/>
    </reaction>
</comment>
<comment type="catalytic activity">
    <reaction evidence="1">
        <text>N-terminal L-aspartyl-[protein] + L-leucyl-tRNA(Leu) = N-terminal L-leucyl-L-aspartyl-[protein] + tRNA(Leu) + H(+)</text>
        <dbReference type="Rhea" id="RHEA:50420"/>
        <dbReference type="Rhea" id="RHEA-COMP:9613"/>
        <dbReference type="Rhea" id="RHEA-COMP:9622"/>
        <dbReference type="Rhea" id="RHEA-COMP:12669"/>
        <dbReference type="Rhea" id="RHEA-COMP:12674"/>
        <dbReference type="ChEBI" id="CHEBI:15378"/>
        <dbReference type="ChEBI" id="CHEBI:64720"/>
        <dbReference type="ChEBI" id="CHEBI:78442"/>
        <dbReference type="ChEBI" id="CHEBI:78494"/>
        <dbReference type="ChEBI" id="CHEBI:133042"/>
        <dbReference type="EC" id="2.3.2.29"/>
    </reaction>
</comment>
<comment type="subcellular location">
    <subcellularLocation>
        <location evidence="1">Cytoplasm</location>
    </subcellularLocation>
</comment>
<comment type="similarity">
    <text evidence="1">Belongs to the R-transferase family. Bpt subfamily.</text>
</comment>
<sequence length="249" mass="28743">MTHQPQQSPQFFLTAPSPCPYLEGQQERKVFTHLVGDKANEINDLLTQGGFRRSRNIAYRPACEVCRACISVRILAGEFEMTRNMRRVWSQNRDLIGRVHKAQPSTEQYALFRDYLDARHRSGGMSDMTVLDYAMMIEDTHVNTQIIEYRRRGPDSFMSAKGDGELIAVALTDVMADGLSMVYSFFLPHMQERSLGTYMILDHIERARAAGLPHVYLGYWVEGSRKMQYKIRFTPQEHLGPRGWQRFEG</sequence>
<proteinExistence type="inferred from homology"/>
<evidence type="ECO:0000255" key="1">
    <source>
        <dbReference type="HAMAP-Rule" id="MF_00689"/>
    </source>
</evidence>
<name>BPT_BRUA1</name>
<protein>
    <recommendedName>
        <fullName evidence="1">Aspartate/glutamate leucyltransferase</fullName>
        <ecNumber evidence="1">2.3.2.29</ecNumber>
    </recommendedName>
</protein>
<keyword id="KW-0012">Acyltransferase</keyword>
<keyword id="KW-0963">Cytoplasm</keyword>
<keyword id="KW-0808">Transferase</keyword>